<accession>Q5HFM4</accession>
<reference key="1">
    <citation type="journal article" date="2005" name="J. Bacteriol.">
        <title>Insights on evolution of virulence and resistance from the complete genome analysis of an early methicillin-resistant Staphylococcus aureus strain and a biofilm-producing methicillin-resistant Staphylococcus epidermidis strain.</title>
        <authorList>
            <person name="Gill S.R."/>
            <person name="Fouts D.E."/>
            <person name="Archer G.L."/>
            <person name="Mongodin E.F."/>
            <person name="DeBoy R.T."/>
            <person name="Ravel J."/>
            <person name="Paulsen I.T."/>
            <person name="Kolonay J.F."/>
            <person name="Brinkac L.M."/>
            <person name="Beanan M.J."/>
            <person name="Dodson R.J."/>
            <person name="Daugherty S.C."/>
            <person name="Madupu R."/>
            <person name="Angiuoli S.V."/>
            <person name="Durkin A.S."/>
            <person name="Haft D.H."/>
            <person name="Vamathevan J.J."/>
            <person name="Khouri H."/>
            <person name="Utterback T.R."/>
            <person name="Lee C."/>
            <person name="Dimitrov G."/>
            <person name="Jiang L."/>
            <person name="Qin H."/>
            <person name="Weidman J."/>
            <person name="Tran K."/>
            <person name="Kang K.H."/>
            <person name="Hance I.R."/>
            <person name="Nelson K.E."/>
            <person name="Fraser C.M."/>
        </authorList>
    </citation>
    <scope>NUCLEOTIDE SEQUENCE [LARGE SCALE GENOMIC DNA]</scope>
    <source>
        <strain>COL</strain>
    </source>
</reference>
<sequence>MTSKSSPLIFERSREGRYAYSLPKSDIKTNSVESLLDDKFIRKNKAEFPEVAELDLVRHYTELSNKNFGVDNGFYPLGSCTMKYNPKINEKVARIPGFSESHPLQDEDQVQGSLEIIYSLQEELKEITGMDEVTLQPAAGAHGEWTALMIFKAYHENNGEGHRDEVIVPDSAHGTNPASASFAGFKSVTVKSNERGEVNIDDLKRVVNENTAAIMLTNPNTLGIFEKNIMEIREIVHNAGGLLYYDGANLNAIMDKVRPGDMGFDAVHLNLHKTFTGPHGGGGPGSGPVGVVKELASYLPKPMVIKDGDKFKYDNDIKNSIGRVKPFYGNFGIYLRAYTYIRTMGATGLKEVSEAAVLNANYIKARLSKHFEIPYKQYCKHEFVLSGVRQKEFGVRTLDMAKRLLDFGVHPPTIYFPLNVEEGMMIEPTETESKETLDYFIDTLISIAEEAKNDPDKVLEAPHTTVIDRLDEATAARKPILKFENLKQEK</sequence>
<keyword id="KW-0560">Oxidoreductase</keyword>
<keyword id="KW-0663">Pyridoxal phosphate</keyword>
<organism>
    <name type="scientific">Staphylococcus aureus (strain COL)</name>
    <dbReference type="NCBI Taxonomy" id="93062"/>
    <lineage>
        <taxon>Bacteria</taxon>
        <taxon>Bacillati</taxon>
        <taxon>Bacillota</taxon>
        <taxon>Bacilli</taxon>
        <taxon>Bacillales</taxon>
        <taxon>Staphylococcaceae</taxon>
        <taxon>Staphylococcus</taxon>
    </lineage>
</organism>
<evidence type="ECO:0000255" key="1">
    <source>
        <dbReference type="HAMAP-Rule" id="MF_00713"/>
    </source>
</evidence>
<name>GCSPB_STAAC</name>
<comment type="function">
    <text evidence="1">The glycine cleavage system catalyzes the degradation of glycine. The P protein binds the alpha-amino group of glycine through its pyridoxal phosphate cofactor; CO(2) is released and the remaining methylamine moiety is then transferred to the lipoamide cofactor of the H protein.</text>
</comment>
<comment type="catalytic activity">
    <reaction evidence="1">
        <text>N(6)-[(R)-lipoyl]-L-lysyl-[glycine-cleavage complex H protein] + glycine + H(+) = N(6)-[(R)-S(8)-aminomethyldihydrolipoyl]-L-lysyl-[glycine-cleavage complex H protein] + CO2</text>
        <dbReference type="Rhea" id="RHEA:24304"/>
        <dbReference type="Rhea" id="RHEA-COMP:10494"/>
        <dbReference type="Rhea" id="RHEA-COMP:10495"/>
        <dbReference type="ChEBI" id="CHEBI:15378"/>
        <dbReference type="ChEBI" id="CHEBI:16526"/>
        <dbReference type="ChEBI" id="CHEBI:57305"/>
        <dbReference type="ChEBI" id="CHEBI:83099"/>
        <dbReference type="ChEBI" id="CHEBI:83143"/>
        <dbReference type="EC" id="1.4.4.2"/>
    </reaction>
</comment>
<comment type="cofactor">
    <cofactor evidence="1">
        <name>pyridoxal 5'-phosphate</name>
        <dbReference type="ChEBI" id="CHEBI:597326"/>
    </cofactor>
</comment>
<comment type="subunit">
    <text evidence="1">The glycine cleavage system is composed of four proteins: P, T, L and H. In this organism, the P 'protein' is a heterodimer of two subunits.</text>
</comment>
<comment type="similarity">
    <text evidence="1">Belongs to the GcvP family. C-terminal subunit subfamily.</text>
</comment>
<gene>
    <name evidence="1" type="primary">gcvPB</name>
    <name type="ordered locus">SACOL1593</name>
</gene>
<feature type="chain" id="PRO_0000167011" description="Probable glycine dehydrogenase (decarboxylating) subunit 2">
    <location>
        <begin position="1"/>
        <end position="490"/>
    </location>
</feature>
<feature type="modified residue" description="N6-(pyridoxal phosphate)lysine" evidence="1">
    <location>
        <position position="273"/>
    </location>
</feature>
<protein>
    <recommendedName>
        <fullName evidence="1">Probable glycine dehydrogenase (decarboxylating) subunit 2</fullName>
        <ecNumber evidence="1">1.4.4.2</ecNumber>
    </recommendedName>
    <alternativeName>
        <fullName evidence="1">Glycine cleavage system P-protein subunit 2</fullName>
    </alternativeName>
    <alternativeName>
        <fullName evidence="1">Glycine decarboxylase subunit 2</fullName>
    </alternativeName>
    <alternativeName>
        <fullName evidence="1">Glycine dehydrogenase (aminomethyl-transferring) subunit 2</fullName>
    </alternativeName>
</protein>
<proteinExistence type="inferred from homology"/>
<dbReference type="EC" id="1.4.4.2" evidence="1"/>
<dbReference type="EMBL" id="CP000046">
    <property type="protein sequence ID" value="AAW38209.1"/>
    <property type="molecule type" value="Genomic_DNA"/>
</dbReference>
<dbReference type="RefSeq" id="WP_000202192.1">
    <property type="nucleotide sequence ID" value="NZ_JBGOFO010000003.1"/>
</dbReference>
<dbReference type="SMR" id="Q5HFM4"/>
<dbReference type="KEGG" id="sac:SACOL1593"/>
<dbReference type="HOGENOM" id="CLU_004620_5_0_9"/>
<dbReference type="Proteomes" id="UP000000530">
    <property type="component" value="Chromosome"/>
</dbReference>
<dbReference type="GO" id="GO:0005829">
    <property type="term" value="C:cytosol"/>
    <property type="evidence" value="ECO:0007669"/>
    <property type="project" value="TreeGrafter"/>
</dbReference>
<dbReference type="GO" id="GO:0005960">
    <property type="term" value="C:glycine cleavage complex"/>
    <property type="evidence" value="ECO:0007669"/>
    <property type="project" value="TreeGrafter"/>
</dbReference>
<dbReference type="GO" id="GO:0016594">
    <property type="term" value="F:glycine binding"/>
    <property type="evidence" value="ECO:0007669"/>
    <property type="project" value="TreeGrafter"/>
</dbReference>
<dbReference type="GO" id="GO:0004375">
    <property type="term" value="F:glycine dehydrogenase (decarboxylating) activity"/>
    <property type="evidence" value="ECO:0007669"/>
    <property type="project" value="UniProtKB-EC"/>
</dbReference>
<dbReference type="GO" id="GO:0030170">
    <property type="term" value="F:pyridoxal phosphate binding"/>
    <property type="evidence" value="ECO:0007669"/>
    <property type="project" value="TreeGrafter"/>
</dbReference>
<dbReference type="GO" id="GO:0019464">
    <property type="term" value="P:glycine decarboxylation via glycine cleavage system"/>
    <property type="evidence" value="ECO:0007669"/>
    <property type="project" value="UniProtKB-UniRule"/>
</dbReference>
<dbReference type="CDD" id="cd00613">
    <property type="entry name" value="GDC-P"/>
    <property type="match status" value="1"/>
</dbReference>
<dbReference type="FunFam" id="3.40.640.10:FF:000034">
    <property type="entry name" value="Probable glycine dehydrogenase (decarboxylating) subunit 2"/>
    <property type="match status" value="1"/>
</dbReference>
<dbReference type="FunFam" id="3.90.1150.10:FF:000014">
    <property type="entry name" value="Probable glycine dehydrogenase (decarboxylating) subunit 2"/>
    <property type="match status" value="1"/>
</dbReference>
<dbReference type="Gene3D" id="6.20.440.10">
    <property type="match status" value="1"/>
</dbReference>
<dbReference type="Gene3D" id="3.90.1150.10">
    <property type="entry name" value="Aspartate Aminotransferase, domain 1"/>
    <property type="match status" value="1"/>
</dbReference>
<dbReference type="Gene3D" id="3.40.640.10">
    <property type="entry name" value="Type I PLP-dependent aspartate aminotransferase-like (Major domain)"/>
    <property type="match status" value="1"/>
</dbReference>
<dbReference type="HAMAP" id="MF_00713">
    <property type="entry name" value="GcvPB"/>
    <property type="match status" value="1"/>
</dbReference>
<dbReference type="InterPro" id="IPR000192">
    <property type="entry name" value="Aminotrans_V_dom"/>
</dbReference>
<dbReference type="InterPro" id="IPR023012">
    <property type="entry name" value="GcvPB"/>
</dbReference>
<dbReference type="InterPro" id="IPR049316">
    <property type="entry name" value="GDC-P_C"/>
</dbReference>
<dbReference type="InterPro" id="IPR020581">
    <property type="entry name" value="GDC_P"/>
</dbReference>
<dbReference type="InterPro" id="IPR015424">
    <property type="entry name" value="PyrdxlP-dep_Trfase"/>
</dbReference>
<dbReference type="InterPro" id="IPR015421">
    <property type="entry name" value="PyrdxlP-dep_Trfase_major"/>
</dbReference>
<dbReference type="InterPro" id="IPR015422">
    <property type="entry name" value="PyrdxlP-dep_Trfase_small"/>
</dbReference>
<dbReference type="NCBIfam" id="NF003346">
    <property type="entry name" value="PRK04366.1"/>
    <property type="match status" value="1"/>
</dbReference>
<dbReference type="PANTHER" id="PTHR11773:SF1">
    <property type="entry name" value="GLYCINE DEHYDROGENASE (DECARBOXYLATING), MITOCHONDRIAL"/>
    <property type="match status" value="1"/>
</dbReference>
<dbReference type="PANTHER" id="PTHR11773">
    <property type="entry name" value="GLYCINE DEHYDROGENASE, DECARBOXYLATING"/>
    <property type="match status" value="1"/>
</dbReference>
<dbReference type="Pfam" id="PF00266">
    <property type="entry name" value="Aminotran_5"/>
    <property type="match status" value="1"/>
</dbReference>
<dbReference type="Pfam" id="PF21478">
    <property type="entry name" value="GcvP2_C"/>
    <property type="match status" value="1"/>
</dbReference>
<dbReference type="SUPFAM" id="SSF53383">
    <property type="entry name" value="PLP-dependent transferases"/>
    <property type="match status" value="1"/>
</dbReference>